<dbReference type="EC" id="2.1.-.-" evidence="1"/>
<dbReference type="EMBL" id="CP001164">
    <property type="protein sequence ID" value="ACI39359.1"/>
    <property type="molecule type" value="Genomic_DNA"/>
</dbReference>
<dbReference type="RefSeq" id="WP_001070358.1">
    <property type="nucleotide sequence ID" value="NC_011353.1"/>
</dbReference>
<dbReference type="SMR" id="B5YVR9"/>
<dbReference type="KEGG" id="ecf:ECH74115_1427"/>
<dbReference type="HOGENOM" id="CLU_036182_2_0_6"/>
<dbReference type="UniPathway" id="UPA00637"/>
<dbReference type="GO" id="GO:0005886">
    <property type="term" value="C:plasma membrane"/>
    <property type="evidence" value="ECO:0007669"/>
    <property type="project" value="UniProtKB-SubCell"/>
</dbReference>
<dbReference type="GO" id="GO:0016747">
    <property type="term" value="F:acyltransferase activity, transferring groups other than amino-acyl groups"/>
    <property type="evidence" value="ECO:0007669"/>
    <property type="project" value="InterPro"/>
</dbReference>
<dbReference type="GO" id="GO:0016741">
    <property type="term" value="F:transferase activity, transferring one-carbon groups"/>
    <property type="evidence" value="ECO:0007669"/>
    <property type="project" value="UniProtKB-UniRule"/>
</dbReference>
<dbReference type="GO" id="GO:0009250">
    <property type="term" value="P:glucan biosynthetic process"/>
    <property type="evidence" value="ECO:0007669"/>
    <property type="project" value="UniProtKB-UniRule"/>
</dbReference>
<dbReference type="HAMAP" id="MF_01066">
    <property type="entry name" value="MdoC_OpgC"/>
    <property type="match status" value="1"/>
</dbReference>
<dbReference type="InterPro" id="IPR002656">
    <property type="entry name" value="Acyl_transf_3_dom"/>
</dbReference>
<dbReference type="InterPro" id="IPR050623">
    <property type="entry name" value="Glucan_succinyl_AcylTrfase"/>
</dbReference>
<dbReference type="InterPro" id="IPR023723">
    <property type="entry name" value="Glucans_biosynth_C"/>
</dbReference>
<dbReference type="NCBIfam" id="NF003014">
    <property type="entry name" value="PRK03854.1"/>
    <property type="match status" value="1"/>
</dbReference>
<dbReference type="PANTHER" id="PTHR36927">
    <property type="entry name" value="BLR4337 PROTEIN"/>
    <property type="match status" value="1"/>
</dbReference>
<dbReference type="PANTHER" id="PTHR36927:SF3">
    <property type="entry name" value="GLUCANS BIOSYNTHESIS PROTEIN C"/>
    <property type="match status" value="1"/>
</dbReference>
<dbReference type="Pfam" id="PF01757">
    <property type="entry name" value="Acyl_transf_3"/>
    <property type="match status" value="1"/>
</dbReference>
<comment type="function">
    <text evidence="1">Necessary for the succinyl substitution of periplasmic glucans. Could catalyze the transfer of succinyl residues from the cytoplasmic side of the membrane to the nascent glucan backbones on the periplasmic side of the membrane.</text>
</comment>
<comment type="pathway">
    <text evidence="1">Glycan metabolism; osmoregulated periplasmic glucan (OPG) biosynthesis.</text>
</comment>
<comment type="subcellular location">
    <subcellularLocation>
        <location evidence="1">Cell membrane</location>
        <topology evidence="1">Multi-pass membrane protein</topology>
    </subcellularLocation>
</comment>
<comment type="similarity">
    <text evidence="1">Belongs to the acyltransferase 3 family. OpgC subfamily.</text>
</comment>
<feature type="chain" id="PRO_1000136563" description="Glucans biosynthesis protein C">
    <location>
        <begin position="1"/>
        <end position="385"/>
    </location>
</feature>
<feature type="transmembrane region" description="Helical" evidence="1">
    <location>
        <begin position="17"/>
        <end position="37"/>
    </location>
</feature>
<feature type="transmembrane region" description="Helical" evidence="1">
    <location>
        <begin position="60"/>
        <end position="80"/>
    </location>
</feature>
<feature type="transmembrane region" description="Helical" evidence="1">
    <location>
        <begin position="91"/>
        <end position="111"/>
    </location>
</feature>
<feature type="transmembrane region" description="Helical" evidence="1">
    <location>
        <begin position="137"/>
        <end position="157"/>
    </location>
</feature>
<feature type="transmembrane region" description="Helical" evidence="1">
    <location>
        <begin position="173"/>
        <end position="193"/>
    </location>
</feature>
<feature type="transmembrane region" description="Helical" evidence="1">
    <location>
        <begin position="212"/>
        <end position="232"/>
    </location>
</feature>
<feature type="transmembrane region" description="Helical" evidence="1">
    <location>
        <begin position="239"/>
        <end position="259"/>
    </location>
</feature>
<feature type="transmembrane region" description="Helical" evidence="1">
    <location>
        <begin position="274"/>
        <end position="294"/>
    </location>
</feature>
<feature type="transmembrane region" description="Helical" evidence="1">
    <location>
        <begin position="311"/>
        <end position="331"/>
    </location>
</feature>
<feature type="transmembrane region" description="Helical" evidence="1">
    <location>
        <begin position="338"/>
        <end position="358"/>
    </location>
</feature>
<evidence type="ECO:0000255" key="1">
    <source>
        <dbReference type="HAMAP-Rule" id="MF_01066"/>
    </source>
</evidence>
<name>OPGC_ECO5E</name>
<protein>
    <recommendedName>
        <fullName evidence="1">Glucans biosynthesis protein C</fullName>
        <ecNumber evidence="1">2.1.-.-</ecNumber>
    </recommendedName>
</protein>
<sequence>MNPVPAQREYFLDSIRAWLMLLGIPFHISLIYSSHTWHVNSAEPSLWLTLFNDFIHSFRMQVFFVISGYFSYMLFLRYPLKKWWKVRVERVGIPMLTAIPLLTLPQFIMLQYVKGKAESWPGLSLYDKYNTLAWELISHLWFLLVLVVMTTLCVWIFKRIRNNLENSDKTNKKFSMVKLSVIFLCLGIGYAVIRRTIFIVYPPILSNGTFNFIVMQTLFYLPFFILGALAFIFPHLKALFTTPSRGCTLAAALAFVAYLLNQRYGSGDAWMYETESVITMVLGLWMVNVVFSFGHRLLNFQSARVTYFVNASLFIYLVHHPLTLFFGAYITPHITSNWLGFLCGLIFVVGIAIILYEIHLRIPLLKFLFSGKPVVKRENDKAPAR</sequence>
<reference key="1">
    <citation type="journal article" date="2011" name="Proc. Natl. Acad. Sci. U.S.A.">
        <title>Genomic anatomy of Escherichia coli O157:H7 outbreaks.</title>
        <authorList>
            <person name="Eppinger M."/>
            <person name="Mammel M.K."/>
            <person name="Leclerc J.E."/>
            <person name="Ravel J."/>
            <person name="Cebula T.A."/>
        </authorList>
    </citation>
    <scope>NUCLEOTIDE SEQUENCE [LARGE SCALE GENOMIC DNA]</scope>
    <source>
        <strain>EC4115 / EHEC</strain>
    </source>
</reference>
<proteinExistence type="inferred from homology"/>
<keyword id="KW-0012">Acyltransferase</keyword>
<keyword id="KW-1003">Cell membrane</keyword>
<keyword id="KW-0472">Membrane</keyword>
<keyword id="KW-0808">Transferase</keyword>
<keyword id="KW-0812">Transmembrane</keyword>
<keyword id="KW-1133">Transmembrane helix</keyword>
<organism>
    <name type="scientific">Escherichia coli O157:H7 (strain EC4115 / EHEC)</name>
    <dbReference type="NCBI Taxonomy" id="444450"/>
    <lineage>
        <taxon>Bacteria</taxon>
        <taxon>Pseudomonadati</taxon>
        <taxon>Pseudomonadota</taxon>
        <taxon>Gammaproteobacteria</taxon>
        <taxon>Enterobacterales</taxon>
        <taxon>Enterobacteriaceae</taxon>
        <taxon>Escherichia</taxon>
    </lineage>
</organism>
<accession>B5YVR9</accession>
<gene>
    <name evidence="1" type="primary">mdoC</name>
    <name evidence="1" type="synonym">opgC</name>
    <name type="ordered locus">ECH74115_1427</name>
</gene>